<organism>
    <name type="scientific">Salmonella paratyphi A (strain AKU_12601)</name>
    <dbReference type="NCBI Taxonomy" id="554290"/>
    <lineage>
        <taxon>Bacteria</taxon>
        <taxon>Pseudomonadati</taxon>
        <taxon>Pseudomonadota</taxon>
        <taxon>Gammaproteobacteria</taxon>
        <taxon>Enterobacterales</taxon>
        <taxon>Enterobacteriaceae</taxon>
        <taxon>Salmonella</taxon>
    </lineage>
</organism>
<gene>
    <name evidence="1" type="primary">ndk</name>
    <name type="ordered locus">SSPA0321</name>
</gene>
<proteinExistence type="inferred from homology"/>
<dbReference type="EC" id="2.7.4.6" evidence="1"/>
<dbReference type="EMBL" id="FM200053">
    <property type="protein sequence ID" value="CAR58439.1"/>
    <property type="molecule type" value="Genomic_DNA"/>
</dbReference>
<dbReference type="RefSeq" id="WP_000963846.1">
    <property type="nucleotide sequence ID" value="NC_011147.1"/>
</dbReference>
<dbReference type="SMR" id="B5BAY2"/>
<dbReference type="KEGG" id="sek:SSPA0321"/>
<dbReference type="HOGENOM" id="CLU_060216_8_1_6"/>
<dbReference type="Proteomes" id="UP000001869">
    <property type="component" value="Chromosome"/>
</dbReference>
<dbReference type="GO" id="GO:0005737">
    <property type="term" value="C:cytoplasm"/>
    <property type="evidence" value="ECO:0007669"/>
    <property type="project" value="UniProtKB-SubCell"/>
</dbReference>
<dbReference type="GO" id="GO:0005524">
    <property type="term" value="F:ATP binding"/>
    <property type="evidence" value="ECO:0007669"/>
    <property type="project" value="UniProtKB-UniRule"/>
</dbReference>
<dbReference type="GO" id="GO:0046872">
    <property type="term" value="F:metal ion binding"/>
    <property type="evidence" value="ECO:0007669"/>
    <property type="project" value="UniProtKB-KW"/>
</dbReference>
<dbReference type="GO" id="GO:0004550">
    <property type="term" value="F:nucleoside diphosphate kinase activity"/>
    <property type="evidence" value="ECO:0007669"/>
    <property type="project" value="UniProtKB-UniRule"/>
</dbReference>
<dbReference type="GO" id="GO:0006241">
    <property type="term" value="P:CTP biosynthetic process"/>
    <property type="evidence" value="ECO:0007669"/>
    <property type="project" value="UniProtKB-UniRule"/>
</dbReference>
<dbReference type="GO" id="GO:0006183">
    <property type="term" value="P:GTP biosynthetic process"/>
    <property type="evidence" value="ECO:0007669"/>
    <property type="project" value="UniProtKB-UniRule"/>
</dbReference>
<dbReference type="GO" id="GO:0006228">
    <property type="term" value="P:UTP biosynthetic process"/>
    <property type="evidence" value="ECO:0007669"/>
    <property type="project" value="UniProtKB-UniRule"/>
</dbReference>
<dbReference type="CDD" id="cd04413">
    <property type="entry name" value="NDPk_I"/>
    <property type="match status" value="1"/>
</dbReference>
<dbReference type="FunFam" id="3.30.70.141:FF:000001">
    <property type="entry name" value="Nucleoside diphosphate kinase"/>
    <property type="match status" value="1"/>
</dbReference>
<dbReference type="Gene3D" id="3.30.70.141">
    <property type="entry name" value="Nucleoside diphosphate kinase-like domain"/>
    <property type="match status" value="1"/>
</dbReference>
<dbReference type="HAMAP" id="MF_00451">
    <property type="entry name" value="NDP_kinase"/>
    <property type="match status" value="1"/>
</dbReference>
<dbReference type="InterPro" id="IPR034907">
    <property type="entry name" value="NDK-like_dom"/>
</dbReference>
<dbReference type="InterPro" id="IPR036850">
    <property type="entry name" value="NDK-like_dom_sf"/>
</dbReference>
<dbReference type="InterPro" id="IPR001564">
    <property type="entry name" value="Nucleoside_diP_kinase"/>
</dbReference>
<dbReference type="InterPro" id="IPR023005">
    <property type="entry name" value="Nucleoside_diP_kinase_AS"/>
</dbReference>
<dbReference type="NCBIfam" id="NF001908">
    <property type="entry name" value="PRK00668.1"/>
    <property type="match status" value="1"/>
</dbReference>
<dbReference type="PANTHER" id="PTHR46161">
    <property type="entry name" value="NUCLEOSIDE DIPHOSPHATE KINASE"/>
    <property type="match status" value="1"/>
</dbReference>
<dbReference type="PANTHER" id="PTHR46161:SF3">
    <property type="entry name" value="NUCLEOSIDE DIPHOSPHATE KINASE DDB_G0292928-RELATED"/>
    <property type="match status" value="1"/>
</dbReference>
<dbReference type="Pfam" id="PF00334">
    <property type="entry name" value="NDK"/>
    <property type="match status" value="1"/>
</dbReference>
<dbReference type="PRINTS" id="PR01243">
    <property type="entry name" value="NUCDPKINASE"/>
</dbReference>
<dbReference type="SMART" id="SM00562">
    <property type="entry name" value="NDK"/>
    <property type="match status" value="1"/>
</dbReference>
<dbReference type="SUPFAM" id="SSF54919">
    <property type="entry name" value="Nucleoside diphosphate kinase, NDK"/>
    <property type="match status" value="1"/>
</dbReference>
<dbReference type="PROSITE" id="PS00469">
    <property type="entry name" value="NDPK"/>
    <property type="match status" value="1"/>
</dbReference>
<dbReference type="PROSITE" id="PS51374">
    <property type="entry name" value="NDPK_LIKE"/>
    <property type="match status" value="1"/>
</dbReference>
<protein>
    <recommendedName>
        <fullName evidence="1">Nucleoside diphosphate kinase</fullName>
        <shortName evidence="1">NDK</shortName>
        <shortName evidence="1">NDP kinase</shortName>
        <ecNumber evidence="1">2.7.4.6</ecNumber>
    </recommendedName>
    <alternativeName>
        <fullName evidence="1">Nucleoside-2-P kinase</fullName>
    </alternativeName>
</protein>
<feature type="chain" id="PRO_1000125015" description="Nucleoside diphosphate kinase">
    <location>
        <begin position="1"/>
        <end position="143"/>
    </location>
</feature>
<feature type="active site" description="Pros-phosphohistidine intermediate" evidence="1">
    <location>
        <position position="117"/>
    </location>
</feature>
<feature type="binding site" evidence="1">
    <location>
        <position position="11"/>
    </location>
    <ligand>
        <name>ATP</name>
        <dbReference type="ChEBI" id="CHEBI:30616"/>
    </ligand>
</feature>
<feature type="binding site" evidence="1">
    <location>
        <position position="59"/>
    </location>
    <ligand>
        <name>ATP</name>
        <dbReference type="ChEBI" id="CHEBI:30616"/>
    </ligand>
</feature>
<feature type="binding site" evidence="1">
    <location>
        <position position="87"/>
    </location>
    <ligand>
        <name>ATP</name>
        <dbReference type="ChEBI" id="CHEBI:30616"/>
    </ligand>
</feature>
<feature type="binding site" evidence="1">
    <location>
        <position position="93"/>
    </location>
    <ligand>
        <name>ATP</name>
        <dbReference type="ChEBI" id="CHEBI:30616"/>
    </ligand>
</feature>
<feature type="binding site" evidence="1">
    <location>
        <position position="104"/>
    </location>
    <ligand>
        <name>ATP</name>
        <dbReference type="ChEBI" id="CHEBI:30616"/>
    </ligand>
</feature>
<feature type="binding site" evidence="1">
    <location>
        <position position="114"/>
    </location>
    <ligand>
        <name>ATP</name>
        <dbReference type="ChEBI" id="CHEBI:30616"/>
    </ligand>
</feature>
<comment type="function">
    <text evidence="1">Major role in the synthesis of nucleoside triphosphates other than ATP. The ATP gamma phosphate is transferred to the NDP beta phosphate via a ping-pong mechanism, using a phosphorylated active-site intermediate.</text>
</comment>
<comment type="catalytic activity">
    <reaction evidence="1">
        <text>a 2'-deoxyribonucleoside 5'-diphosphate + ATP = a 2'-deoxyribonucleoside 5'-triphosphate + ADP</text>
        <dbReference type="Rhea" id="RHEA:44640"/>
        <dbReference type="ChEBI" id="CHEBI:30616"/>
        <dbReference type="ChEBI" id="CHEBI:61560"/>
        <dbReference type="ChEBI" id="CHEBI:73316"/>
        <dbReference type="ChEBI" id="CHEBI:456216"/>
        <dbReference type="EC" id="2.7.4.6"/>
    </reaction>
</comment>
<comment type="catalytic activity">
    <reaction evidence="1">
        <text>a ribonucleoside 5'-diphosphate + ATP = a ribonucleoside 5'-triphosphate + ADP</text>
        <dbReference type="Rhea" id="RHEA:18113"/>
        <dbReference type="ChEBI" id="CHEBI:30616"/>
        <dbReference type="ChEBI" id="CHEBI:57930"/>
        <dbReference type="ChEBI" id="CHEBI:61557"/>
        <dbReference type="ChEBI" id="CHEBI:456216"/>
        <dbReference type="EC" id="2.7.4.6"/>
    </reaction>
</comment>
<comment type="cofactor">
    <cofactor evidence="1">
        <name>Mg(2+)</name>
        <dbReference type="ChEBI" id="CHEBI:18420"/>
    </cofactor>
</comment>
<comment type="subunit">
    <text evidence="1">Homotetramer.</text>
</comment>
<comment type="subcellular location">
    <subcellularLocation>
        <location evidence="1">Cytoplasm</location>
    </subcellularLocation>
</comment>
<comment type="similarity">
    <text evidence="1">Belongs to the NDK family.</text>
</comment>
<sequence length="143" mass="15522">MAIERTFSIIKPNAVAKNVIGSIFARFEAAGFKIVGTKMLHLTVEQARGFYAEHDGKPFFDGLVEFMTSGPIVVSVLESENAVQRHRDLLGATNPANALAGTLRADYADSLTENGTHGSDSLESAQREIAFFFGEGEVCPRTR</sequence>
<evidence type="ECO:0000255" key="1">
    <source>
        <dbReference type="HAMAP-Rule" id="MF_00451"/>
    </source>
</evidence>
<name>NDK_SALPK</name>
<keyword id="KW-0067">ATP-binding</keyword>
<keyword id="KW-0963">Cytoplasm</keyword>
<keyword id="KW-0418">Kinase</keyword>
<keyword id="KW-0460">Magnesium</keyword>
<keyword id="KW-0479">Metal-binding</keyword>
<keyword id="KW-0546">Nucleotide metabolism</keyword>
<keyword id="KW-0547">Nucleotide-binding</keyword>
<keyword id="KW-0597">Phosphoprotein</keyword>
<keyword id="KW-0808">Transferase</keyword>
<accession>B5BAY2</accession>
<reference key="1">
    <citation type="journal article" date="2009" name="BMC Genomics">
        <title>Pseudogene accumulation in the evolutionary histories of Salmonella enterica serovars Paratyphi A and Typhi.</title>
        <authorList>
            <person name="Holt K.E."/>
            <person name="Thomson N.R."/>
            <person name="Wain J."/>
            <person name="Langridge G.C."/>
            <person name="Hasan R."/>
            <person name="Bhutta Z.A."/>
            <person name="Quail M.A."/>
            <person name="Norbertczak H."/>
            <person name="Walker D."/>
            <person name="Simmonds M."/>
            <person name="White B."/>
            <person name="Bason N."/>
            <person name="Mungall K."/>
            <person name="Dougan G."/>
            <person name="Parkhill J."/>
        </authorList>
    </citation>
    <scope>NUCLEOTIDE SEQUENCE [LARGE SCALE GENOMIC DNA]</scope>
    <source>
        <strain>AKU_12601</strain>
    </source>
</reference>